<proteinExistence type="evidence at transcript level"/>
<keyword id="KW-0378">Hydrolase</keyword>
<keyword id="KW-0460">Magnesium</keyword>
<keyword id="KW-0464">Manganese</keyword>
<keyword id="KW-0479">Metal-binding</keyword>
<keyword id="KW-0597">Phosphoprotein</keyword>
<keyword id="KW-0904">Protein phosphatase</keyword>
<keyword id="KW-1185">Reference proteome</keyword>
<sequence>MVSTTFRRIVSPCWRPFGIGEDSSPGSDDTNGRLDGLLWYKDSGNHITGEFSMAVVQANNLLEDHSQLESGPISLHESGPEATFVGVYDGHGGPEAARFVNDRLFYNIKRYTSEQRGMSPDVITRGFVATEEEFLGLVQEQWKTKPQIASVGACCLVGIVCNGLLYVANAGDSRVVLGKVANPFKELKAVQLSTEHNASIESVREELRLLHPDDPNIVVLKHKVWRVKGIIQVSRSIGDAYLKRAEFNQEPLLPKFRVPERFEKPIMRAEPTITVHKIHPEDQFLIFASDGLWEHLSNQEAVDIVNSCPRNGVARKLVKAALQEAAKKREMRYSDLEKIERGIRRHFHDDITVIVVFLHATNFATRTPISVKGGGLLSAHNPVL</sequence>
<organism>
    <name type="scientific">Arabidopsis thaliana</name>
    <name type="common">Mouse-ear cress</name>
    <dbReference type="NCBI Taxonomy" id="3702"/>
    <lineage>
        <taxon>Eukaryota</taxon>
        <taxon>Viridiplantae</taxon>
        <taxon>Streptophyta</taxon>
        <taxon>Embryophyta</taxon>
        <taxon>Tracheophyta</taxon>
        <taxon>Spermatophyta</taxon>
        <taxon>Magnoliopsida</taxon>
        <taxon>eudicotyledons</taxon>
        <taxon>Gunneridae</taxon>
        <taxon>Pentapetalae</taxon>
        <taxon>rosids</taxon>
        <taxon>malvids</taxon>
        <taxon>Brassicales</taxon>
        <taxon>Brassicaceae</taxon>
        <taxon>Camelineae</taxon>
        <taxon>Arabidopsis</taxon>
    </lineage>
</organism>
<dbReference type="EC" id="3.1.3.16" evidence="3"/>
<dbReference type="EMBL" id="AJ302053">
    <property type="protein sequence ID" value="CAC44619.1"/>
    <property type="molecule type" value="Genomic_DNA"/>
</dbReference>
<dbReference type="EMBL" id="AL132970">
    <property type="protein sequence ID" value="CAB82700.1"/>
    <property type="status" value="ALT_SEQ"/>
    <property type="molecule type" value="Genomic_DNA"/>
</dbReference>
<dbReference type="EMBL" id="CP002686">
    <property type="protein sequence ID" value="AEE79332.1"/>
    <property type="molecule type" value="Genomic_DNA"/>
</dbReference>
<dbReference type="EMBL" id="CP002686">
    <property type="protein sequence ID" value="AEE79333.1"/>
    <property type="molecule type" value="Genomic_DNA"/>
</dbReference>
<dbReference type="EMBL" id="BT014892">
    <property type="protein sequence ID" value="AAT44968.1"/>
    <property type="molecule type" value="mRNA"/>
</dbReference>
<dbReference type="EMBL" id="BT021925">
    <property type="protein sequence ID" value="AAX49374.1"/>
    <property type="molecule type" value="mRNA"/>
</dbReference>
<dbReference type="EMBL" id="AK229292">
    <property type="protein sequence ID" value="BAF01155.1"/>
    <property type="molecule type" value="mRNA"/>
</dbReference>
<dbReference type="PIR" id="T47644">
    <property type="entry name" value="T47644"/>
</dbReference>
<dbReference type="RefSeq" id="NP_191065.2">
    <property type="nucleotide sequence ID" value="NM_115363.3"/>
</dbReference>
<dbReference type="RefSeq" id="NP_974438.1">
    <property type="nucleotide sequence ID" value="NM_202709.2"/>
</dbReference>
<dbReference type="SMR" id="Q94CL8"/>
<dbReference type="BioGRID" id="9987">
    <property type="interactions" value="1"/>
</dbReference>
<dbReference type="FunCoup" id="Q94CL8">
    <property type="interactions" value="3498"/>
</dbReference>
<dbReference type="IntAct" id="Q94CL8">
    <property type="interactions" value="1"/>
</dbReference>
<dbReference type="STRING" id="3702.Q94CL8"/>
<dbReference type="iPTMnet" id="Q94CL8"/>
<dbReference type="PaxDb" id="3702-AT3G55050.2"/>
<dbReference type="ProteomicsDB" id="248801"/>
<dbReference type="DNASU" id="824671"/>
<dbReference type="EnsemblPlants" id="AT3G55050.1">
    <property type="protein sequence ID" value="AT3G55050.1"/>
    <property type="gene ID" value="AT3G55050"/>
</dbReference>
<dbReference type="EnsemblPlants" id="AT3G55050.2">
    <property type="protein sequence ID" value="AT3G55050.2"/>
    <property type="gene ID" value="AT3G55050"/>
</dbReference>
<dbReference type="GeneID" id="824671"/>
<dbReference type="Gramene" id="AT3G55050.1">
    <property type="protein sequence ID" value="AT3G55050.1"/>
    <property type="gene ID" value="AT3G55050"/>
</dbReference>
<dbReference type="Gramene" id="AT3G55050.2">
    <property type="protein sequence ID" value="AT3G55050.2"/>
    <property type="gene ID" value="AT3G55050"/>
</dbReference>
<dbReference type="KEGG" id="ath:AT3G55050"/>
<dbReference type="Araport" id="AT3G55050"/>
<dbReference type="TAIR" id="AT3G55050">
    <property type="gene designation" value="PP2C.D4"/>
</dbReference>
<dbReference type="eggNOG" id="KOG0700">
    <property type="taxonomic scope" value="Eukaryota"/>
</dbReference>
<dbReference type="HOGENOM" id="CLU_013173_2_0_1"/>
<dbReference type="InParanoid" id="Q94CL8"/>
<dbReference type="OMA" id="RCIGDAY"/>
<dbReference type="PhylomeDB" id="Q94CL8"/>
<dbReference type="PRO" id="PR:Q94CL8"/>
<dbReference type="Proteomes" id="UP000006548">
    <property type="component" value="Chromosome 3"/>
</dbReference>
<dbReference type="ExpressionAtlas" id="Q94CL8">
    <property type="expression patterns" value="baseline and differential"/>
</dbReference>
<dbReference type="GO" id="GO:0046872">
    <property type="term" value="F:metal ion binding"/>
    <property type="evidence" value="ECO:0007669"/>
    <property type="project" value="UniProtKB-KW"/>
</dbReference>
<dbReference type="GO" id="GO:0004722">
    <property type="term" value="F:protein serine/threonine phosphatase activity"/>
    <property type="evidence" value="ECO:0007669"/>
    <property type="project" value="UniProtKB-EC"/>
</dbReference>
<dbReference type="CDD" id="cd00143">
    <property type="entry name" value="PP2Cc"/>
    <property type="match status" value="1"/>
</dbReference>
<dbReference type="FunFam" id="3.60.40.10:FF:000008">
    <property type="entry name" value="Phosphatase 2C family protein"/>
    <property type="match status" value="1"/>
</dbReference>
<dbReference type="Gene3D" id="3.60.40.10">
    <property type="entry name" value="PPM-type phosphatase domain"/>
    <property type="match status" value="1"/>
</dbReference>
<dbReference type="InterPro" id="IPR015655">
    <property type="entry name" value="PP2C"/>
</dbReference>
<dbReference type="InterPro" id="IPR000222">
    <property type="entry name" value="PP2C_BS"/>
</dbReference>
<dbReference type="InterPro" id="IPR036457">
    <property type="entry name" value="PPM-type-like_dom_sf"/>
</dbReference>
<dbReference type="InterPro" id="IPR001932">
    <property type="entry name" value="PPM-type_phosphatase-like_dom"/>
</dbReference>
<dbReference type="PANTHER" id="PTHR47992">
    <property type="entry name" value="PROTEIN PHOSPHATASE"/>
    <property type="match status" value="1"/>
</dbReference>
<dbReference type="Pfam" id="PF00481">
    <property type="entry name" value="PP2C"/>
    <property type="match status" value="1"/>
</dbReference>
<dbReference type="SMART" id="SM00332">
    <property type="entry name" value="PP2Cc"/>
    <property type="match status" value="1"/>
</dbReference>
<dbReference type="SUPFAM" id="SSF81606">
    <property type="entry name" value="PP2C-like"/>
    <property type="match status" value="1"/>
</dbReference>
<dbReference type="PROSITE" id="PS01032">
    <property type="entry name" value="PPM_1"/>
    <property type="match status" value="1"/>
</dbReference>
<dbReference type="PROSITE" id="PS51746">
    <property type="entry name" value="PPM_2"/>
    <property type="match status" value="1"/>
</dbReference>
<evidence type="ECO:0000250" key="1">
    <source>
        <dbReference type="UniProtKB" id="P35813"/>
    </source>
</evidence>
<evidence type="ECO:0000250" key="2">
    <source>
        <dbReference type="UniProtKB" id="Q84JD5"/>
    </source>
</evidence>
<evidence type="ECO:0000250" key="3">
    <source>
        <dbReference type="UniProtKB" id="Q9LHJ9"/>
    </source>
</evidence>
<evidence type="ECO:0000255" key="4">
    <source>
        <dbReference type="PROSITE-ProRule" id="PRU01082"/>
    </source>
</evidence>
<evidence type="ECO:0000303" key="5">
    <source>
    </source>
</evidence>
<evidence type="ECO:0000303" key="6">
    <source>
    </source>
</evidence>
<evidence type="ECO:0000303" key="7">
    <source ref="1"/>
</evidence>
<evidence type="ECO:0000305" key="8"/>
<evidence type="ECO:0000312" key="9">
    <source>
        <dbReference type="Araport" id="AT3G55050"/>
    </source>
</evidence>
<evidence type="ECO:0000312" key="10">
    <source>
        <dbReference type="EMBL" id="CAB82700.1"/>
    </source>
</evidence>
<protein>
    <recommendedName>
        <fullName evidence="5">Probable protein phosphatase 2C 48</fullName>
        <shortName evidence="5">AtPP2C48</shortName>
        <ecNumber evidence="3">3.1.3.16</ecNumber>
    </recommendedName>
    <alternativeName>
        <fullName evidence="7">Protein phosphatase 2C 6</fullName>
    </alternativeName>
</protein>
<reference key="1">
    <citation type="submission" date="2000-12" db="EMBL/GenBank/DDBJ databases">
        <title>PP2C6, a new member of the PP2C family in Arabidopsis thaliana.</title>
        <authorList>
            <person name="Bargues M."/>
            <person name="Terol J."/>
            <person name="Paricio N."/>
            <person name="Perez-Alonso M."/>
        </authorList>
    </citation>
    <scope>NUCLEOTIDE SEQUENCE [GENOMIC DNA]</scope>
</reference>
<reference key="2">
    <citation type="journal article" date="2000" name="Nature">
        <title>Sequence and analysis of chromosome 3 of the plant Arabidopsis thaliana.</title>
        <authorList>
            <person name="Salanoubat M."/>
            <person name="Lemcke K."/>
            <person name="Rieger M."/>
            <person name="Ansorge W."/>
            <person name="Unseld M."/>
            <person name="Fartmann B."/>
            <person name="Valle G."/>
            <person name="Bloecker H."/>
            <person name="Perez-Alonso M."/>
            <person name="Obermaier B."/>
            <person name="Delseny M."/>
            <person name="Boutry M."/>
            <person name="Grivell L.A."/>
            <person name="Mache R."/>
            <person name="Puigdomenech P."/>
            <person name="De Simone V."/>
            <person name="Choisne N."/>
            <person name="Artiguenave F."/>
            <person name="Robert C."/>
            <person name="Brottier P."/>
            <person name="Wincker P."/>
            <person name="Cattolico L."/>
            <person name="Weissenbach J."/>
            <person name="Saurin W."/>
            <person name="Quetier F."/>
            <person name="Schaefer M."/>
            <person name="Mueller-Auer S."/>
            <person name="Gabel C."/>
            <person name="Fuchs M."/>
            <person name="Benes V."/>
            <person name="Wurmbach E."/>
            <person name="Drzonek H."/>
            <person name="Erfle H."/>
            <person name="Jordan N."/>
            <person name="Bangert S."/>
            <person name="Wiedelmann R."/>
            <person name="Kranz H."/>
            <person name="Voss H."/>
            <person name="Holland R."/>
            <person name="Brandt P."/>
            <person name="Nyakatura G."/>
            <person name="Vezzi A."/>
            <person name="D'Angelo M."/>
            <person name="Pallavicini A."/>
            <person name="Toppo S."/>
            <person name="Simionati B."/>
            <person name="Conrad A."/>
            <person name="Hornischer K."/>
            <person name="Kauer G."/>
            <person name="Loehnert T.-H."/>
            <person name="Nordsiek G."/>
            <person name="Reichelt J."/>
            <person name="Scharfe M."/>
            <person name="Schoen O."/>
            <person name="Bargues M."/>
            <person name="Terol J."/>
            <person name="Climent J."/>
            <person name="Navarro P."/>
            <person name="Collado C."/>
            <person name="Perez-Perez A."/>
            <person name="Ottenwaelder B."/>
            <person name="Duchemin D."/>
            <person name="Cooke R."/>
            <person name="Laudie M."/>
            <person name="Berger-Llauro C."/>
            <person name="Purnelle B."/>
            <person name="Masuy D."/>
            <person name="de Haan M."/>
            <person name="Maarse A.C."/>
            <person name="Alcaraz J.-P."/>
            <person name="Cottet A."/>
            <person name="Casacuberta E."/>
            <person name="Monfort A."/>
            <person name="Argiriou A."/>
            <person name="Flores M."/>
            <person name="Liguori R."/>
            <person name="Vitale D."/>
            <person name="Mannhaupt G."/>
            <person name="Haase D."/>
            <person name="Schoof H."/>
            <person name="Rudd S."/>
            <person name="Zaccaria P."/>
            <person name="Mewes H.-W."/>
            <person name="Mayer K.F.X."/>
            <person name="Kaul S."/>
            <person name="Town C.D."/>
            <person name="Koo H.L."/>
            <person name="Tallon L.J."/>
            <person name="Jenkins J."/>
            <person name="Rooney T."/>
            <person name="Rizzo M."/>
            <person name="Walts A."/>
            <person name="Utterback T."/>
            <person name="Fujii C.Y."/>
            <person name="Shea T.P."/>
            <person name="Creasy T.H."/>
            <person name="Haas B."/>
            <person name="Maiti R."/>
            <person name="Wu D."/>
            <person name="Peterson J."/>
            <person name="Van Aken S."/>
            <person name="Pai G."/>
            <person name="Militscher J."/>
            <person name="Sellers P."/>
            <person name="Gill J.E."/>
            <person name="Feldblyum T.V."/>
            <person name="Preuss D."/>
            <person name="Lin X."/>
            <person name="Nierman W.C."/>
            <person name="Salzberg S.L."/>
            <person name="White O."/>
            <person name="Venter J.C."/>
            <person name="Fraser C.M."/>
            <person name="Kaneko T."/>
            <person name="Nakamura Y."/>
            <person name="Sato S."/>
            <person name="Kato T."/>
            <person name="Asamizu E."/>
            <person name="Sasamoto S."/>
            <person name="Kimura T."/>
            <person name="Idesawa K."/>
            <person name="Kawashima K."/>
            <person name="Kishida Y."/>
            <person name="Kiyokawa C."/>
            <person name="Kohara M."/>
            <person name="Matsumoto M."/>
            <person name="Matsuno A."/>
            <person name="Muraki A."/>
            <person name="Nakayama S."/>
            <person name="Nakazaki N."/>
            <person name="Shinpo S."/>
            <person name="Takeuchi C."/>
            <person name="Wada T."/>
            <person name="Watanabe A."/>
            <person name="Yamada M."/>
            <person name="Yasuda M."/>
            <person name="Tabata S."/>
        </authorList>
    </citation>
    <scope>NUCLEOTIDE SEQUENCE [LARGE SCALE GENOMIC DNA]</scope>
    <source>
        <strain>cv. Columbia</strain>
    </source>
</reference>
<reference key="3">
    <citation type="journal article" date="2017" name="Plant J.">
        <title>Araport11: a complete reannotation of the Arabidopsis thaliana reference genome.</title>
        <authorList>
            <person name="Cheng C.Y."/>
            <person name="Krishnakumar V."/>
            <person name="Chan A.P."/>
            <person name="Thibaud-Nissen F."/>
            <person name="Schobel S."/>
            <person name="Town C.D."/>
        </authorList>
    </citation>
    <scope>GENOME REANNOTATION</scope>
    <source>
        <strain>cv. Columbia</strain>
    </source>
</reference>
<reference key="4">
    <citation type="submission" date="2005-03" db="EMBL/GenBank/DDBJ databases">
        <title>Arabidopsis ORF clones.</title>
        <authorList>
            <person name="Kim C.J."/>
            <person name="Chen H."/>
            <person name="Cheuk R.F."/>
            <person name="Shinn P."/>
            <person name="Ecker J.R."/>
        </authorList>
    </citation>
    <scope>NUCLEOTIDE SEQUENCE [LARGE SCALE MRNA]</scope>
    <source>
        <strain>cv. Columbia</strain>
    </source>
</reference>
<reference key="5">
    <citation type="submission" date="2006-07" db="EMBL/GenBank/DDBJ databases">
        <title>Large-scale analysis of RIKEN Arabidopsis full-length (RAFL) cDNAs.</title>
        <authorList>
            <person name="Totoki Y."/>
            <person name="Seki M."/>
            <person name="Ishida J."/>
            <person name="Nakajima M."/>
            <person name="Enju A."/>
            <person name="Kamiya A."/>
            <person name="Narusaka M."/>
            <person name="Shin-i T."/>
            <person name="Nakagawa M."/>
            <person name="Sakamoto N."/>
            <person name="Oishi K."/>
            <person name="Kohara Y."/>
            <person name="Kobayashi M."/>
            <person name="Toyoda A."/>
            <person name="Sakaki Y."/>
            <person name="Sakurai T."/>
            <person name="Iida K."/>
            <person name="Akiyama K."/>
            <person name="Satou M."/>
            <person name="Toyoda T."/>
            <person name="Konagaya A."/>
            <person name="Carninci P."/>
            <person name="Kawai J."/>
            <person name="Hayashizaki Y."/>
            <person name="Shinozaki K."/>
        </authorList>
    </citation>
    <scope>NUCLEOTIDE SEQUENCE [LARGE SCALE MRNA]</scope>
    <source>
        <strain>cv. Columbia</strain>
    </source>
</reference>
<reference key="6">
    <citation type="journal article" date="2008" name="BMC Genomics">
        <title>Genome-wide and expression analysis of protein phosphatase 2C in rice and Arabidopsis.</title>
        <authorList>
            <person name="Xue T."/>
            <person name="Wang D."/>
            <person name="Zhang S."/>
            <person name="Ehlting J."/>
            <person name="Ni F."/>
            <person name="Jacab S."/>
            <person name="Zheng C."/>
            <person name="Zhong Y."/>
        </authorList>
    </citation>
    <scope>GENE FAMILY</scope>
    <scope>NOMENCLATURE</scope>
</reference>
<reference key="7">
    <citation type="journal article" date="2014" name="Plant Cell">
        <title>SAUR inhibition of PP2C-D phosphatases activates plasma membrane H+-ATPases to promote cell expansion in Arabidopsis.</title>
        <authorList>
            <person name="Spartz A.K."/>
            <person name="Ren H."/>
            <person name="Park M.Y."/>
            <person name="Grandt K.N."/>
            <person name="Lee S.H."/>
            <person name="Murphy A.S."/>
            <person name="Sussman M.R."/>
            <person name="Overvoorde P.J."/>
            <person name="Gray W.M."/>
        </authorList>
    </citation>
    <scope>GENE FAMILY</scope>
    <scope>NOMENCLATURE</scope>
    <source>
        <strain>cv. Columbia</strain>
    </source>
</reference>
<accession>Q94CL8</accession>
<accession>Q9M2W1</accession>
<gene>
    <name evidence="7" type="primary">PP2C6</name>
    <name evidence="6" type="synonym">PP2C-D4</name>
    <name evidence="5" type="synonym">PP2C48</name>
    <name evidence="9" type="ordered locus">At3g55050</name>
    <name evidence="10" type="ORF">T15C9.50</name>
</gene>
<comment type="function">
    <text evidence="2">May dephosphorylate and repress plasma membrane H(+)-ATPases (PM H(+)-ATPases, e.g. AHA1 and AHA2), thus influencing negatively plant growth and fitness.</text>
</comment>
<comment type="catalytic activity">
    <reaction evidence="3">
        <text>O-phospho-L-seryl-[protein] + H2O = L-seryl-[protein] + phosphate</text>
        <dbReference type="Rhea" id="RHEA:20629"/>
        <dbReference type="Rhea" id="RHEA-COMP:9863"/>
        <dbReference type="Rhea" id="RHEA-COMP:11604"/>
        <dbReference type="ChEBI" id="CHEBI:15377"/>
        <dbReference type="ChEBI" id="CHEBI:29999"/>
        <dbReference type="ChEBI" id="CHEBI:43474"/>
        <dbReference type="ChEBI" id="CHEBI:83421"/>
        <dbReference type="EC" id="3.1.3.16"/>
    </reaction>
</comment>
<comment type="catalytic activity">
    <reaction evidence="3">
        <text>O-phospho-L-threonyl-[protein] + H2O = L-threonyl-[protein] + phosphate</text>
        <dbReference type="Rhea" id="RHEA:47004"/>
        <dbReference type="Rhea" id="RHEA-COMP:11060"/>
        <dbReference type="Rhea" id="RHEA-COMP:11605"/>
        <dbReference type="ChEBI" id="CHEBI:15377"/>
        <dbReference type="ChEBI" id="CHEBI:30013"/>
        <dbReference type="ChEBI" id="CHEBI:43474"/>
        <dbReference type="ChEBI" id="CHEBI:61977"/>
        <dbReference type="EC" id="3.1.3.16"/>
    </reaction>
</comment>
<comment type="cofactor">
    <cofactor evidence="1">
        <name>Mg(2+)</name>
        <dbReference type="ChEBI" id="CHEBI:18420"/>
    </cofactor>
    <cofactor evidence="1">
        <name>Mn(2+)</name>
        <dbReference type="ChEBI" id="CHEBI:29035"/>
    </cofactor>
    <text evidence="1">Binds 2 magnesium or manganese ions per subunit.</text>
</comment>
<comment type="similarity">
    <text evidence="8">Belongs to the PP2C family.</text>
</comment>
<comment type="sequence caution" evidence="8">
    <conflict type="erroneous gene model prediction">
        <sequence resource="EMBL-CDS" id="CAB82700"/>
    </conflict>
</comment>
<feature type="chain" id="PRO_0000367972" description="Probable protein phosphatase 2C 48">
    <location>
        <begin position="1"/>
        <end position="384"/>
    </location>
</feature>
<feature type="domain" description="PPM-type phosphatase" evidence="4">
    <location>
        <begin position="47"/>
        <end position="358"/>
    </location>
</feature>
<feature type="binding site" evidence="1">
    <location>
        <position position="89"/>
    </location>
    <ligand>
        <name>Mn(2+)</name>
        <dbReference type="ChEBI" id="CHEBI:29035"/>
        <label>1</label>
    </ligand>
</feature>
<feature type="binding site" evidence="1">
    <location>
        <position position="89"/>
    </location>
    <ligand>
        <name>Mn(2+)</name>
        <dbReference type="ChEBI" id="CHEBI:29035"/>
        <label>2</label>
    </ligand>
</feature>
<feature type="binding site" evidence="1">
    <location>
        <position position="90"/>
    </location>
    <ligand>
        <name>Mn(2+)</name>
        <dbReference type="ChEBI" id="CHEBI:29035"/>
        <label>1</label>
    </ligand>
</feature>
<feature type="binding site" evidence="1">
    <location>
        <position position="290"/>
    </location>
    <ligand>
        <name>Mn(2+)</name>
        <dbReference type="ChEBI" id="CHEBI:29035"/>
        <label>2</label>
    </ligand>
</feature>
<feature type="binding site" evidence="1">
    <location>
        <position position="349"/>
    </location>
    <ligand>
        <name>Mn(2+)</name>
        <dbReference type="ChEBI" id="CHEBI:29035"/>
        <label>2</label>
    </ligand>
</feature>
<feature type="modified residue" description="Phosphoserine" evidence="3">
    <location>
        <position position="78"/>
    </location>
</feature>
<name>P2C48_ARATH</name>